<feature type="chain" id="PRO_0000240721" description="Argininosuccinate lyase">
    <location>
        <begin position="1"/>
        <end position="461"/>
    </location>
</feature>
<organism>
    <name type="scientific">Chlorobium chlorochromatii (strain CaD3)</name>
    <dbReference type="NCBI Taxonomy" id="340177"/>
    <lineage>
        <taxon>Bacteria</taxon>
        <taxon>Pseudomonadati</taxon>
        <taxon>Chlorobiota</taxon>
        <taxon>Chlorobiia</taxon>
        <taxon>Chlorobiales</taxon>
        <taxon>Chlorobiaceae</taxon>
        <taxon>Chlorobium/Pelodictyon group</taxon>
        <taxon>Chlorobium</taxon>
    </lineage>
</organism>
<keyword id="KW-0028">Amino-acid biosynthesis</keyword>
<keyword id="KW-0055">Arginine biosynthesis</keyword>
<keyword id="KW-0963">Cytoplasm</keyword>
<keyword id="KW-0456">Lyase</keyword>
<evidence type="ECO:0000255" key="1">
    <source>
        <dbReference type="HAMAP-Rule" id="MF_00006"/>
    </source>
</evidence>
<gene>
    <name evidence="1" type="primary">argH</name>
    <name type="ordered locus">Cag_0730</name>
</gene>
<name>ARLY_CHLCH</name>
<protein>
    <recommendedName>
        <fullName evidence="1">Argininosuccinate lyase</fullName>
        <shortName evidence="1">ASAL</shortName>
        <ecNumber evidence="1">4.3.2.1</ecNumber>
    </recommendedName>
    <alternativeName>
        <fullName evidence="1">Arginosuccinase</fullName>
    </alternativeName>
</protein>
<comment type="catalytic activity">
    <reaction evidence="1">
        <text>2-(N(omega)-L-arginino)succinate = fumarate + L-arginine</text>
        <dbReference type="Rhea" id="RHEA:24020"/>
        <dbReference type="ChEBI" id="CHEBI:29806"/>
        <dbReference type="ChEBI" id="CHEBI:32682"/>
        <dbReference type="ChEBI" id="CHEBI:57472"/>
        <dbReference type="EC" id="4.3.2.1"/>
    </reaction>
</comment>
<comment type="pathway">
    <text evidence="1">Amino-acid biosynthesis; L-arginine biosynthesis; L-arginine from L-ornithine and carbamoyl phosphate: step 3/3.</text>
</comment>
<comment type="subcellular location">
    <subcellularLocation>
        <location evidence="1">Cytoplasm</location>
    </subcellularLocation>
</comment>
<comment type="similarity">
    <text evidence="1">Belongs to the lyase 1 family. Argininosuccinate lyase subfamily.</text>
</comment>
<reference key="1">
    <citation type="submission" date="2005-08" db="EMBL/GenBank/DDBJ databases">
        <title>Complete sequence of Chlorobium chlorochromatii CaD3.</title>
        <authorList>
            <consortium name="US DOE Joint Genome Institute"/>
            <person name="Copeland A."/>
            <person name="Lucas S."/>
            <person name="Lapidus A."/>
            <person name="Barry K."/>
            <person name="Detter J.C."/>
            <person name="Glavina T."/>
            <person name="Hammon N."/>
            <person name="Israni S."/>
            <person name="Pitluck S."/>
            <person name="Bryant D."/>
            <person name="Schmutz J."/>
            <person name="Larimer F."/>
            <person name="Land M."/>
            <person name="Kyrpides N."/>
            <person name="Ivanova N."/>
            <person name="Richardson P."/>
        </authorList>
    </citation>
    <scope>NUCLEOTIDE SEQUENCE [LARGE SCALE GENOMIC DNA]</scope>
    <source>
        <strain>CaD3</strain>
    </source>
</reference>
<sequence length="461" mass="51841">MSSKNKELLWQSRFSLPFDRDALRFSSSVHVDKALYREDIQGSIAHVTMLAEQQIVSHEEAQAIIAGLQEIELELRDGNIVPHWEDEDIHTVIENRLKEKIGAVAGKLHSGRSRNDQVATDTRLYLRRNIGSLQAALSELLTVLLQKAEHYCDTIIFGYTHLQRAQPISAGHYYMAYFTMFLRDRDRLQDLLKRVNISPLGAAAFAGSTLPLNPARSAELLGFEGIFSNSIDAVSDRDILIEFLSDCAMVMMHLSRFAEDVILWSSYEFGYLEISDAFATGSSLMPQKKNADIAELVRGKAGRVYGNLMAMLTIMKGLPLSYNRDMQEDKQPLFDSTETAINSVTIFSKMLENTRLKEERLAKLTSEDLSLATEIAEYLVQKHIPFRDAHRITGKIVSWSIESGVALPHIPLEQFKSFAAEFDEGIYACLKADASVRAKKTHGSCSFESVKQQINAAKERI</sequence>
<dbReference type="EC" id="4.3.2.1" evidence="1"/>
<dbReference type="EMBL" id="CP000108">
    <property type="protein sequence ID" value="ABB28001.1"/>
    <property type="molecule type" value="Genomic_DNA"/>
</dbReference>
<dbReference type="SMR" id="Q3ASM4"/>
<dbReference type="STRING" id="340177.Cag_0730"/>
<dbReference type="KEGG" id="cch:Cag_0730"/>
<dbReference type="eggNOG" id="COG0165">
    <property type="taxonomic scope" value="Bacteria"/>
</dbReference>
<dbReference type="HOGENOM" id="CLU_027272_2_3_10"/>
<dbReference type="OrthoDB" id="9769623at2"/>
<dbReference type="UniPathway" id="UPA00068">
    <property type="reaction ID" value="UER00114"/>
</dbReference>
<dbReference type="GO" id="GO:0005829">
    <property type="term" value="C:cytosol"/>
    <property type="evidence" value="ECO:0007669"/>
    <property type="project" value="TreeGrafter"/>
</dbReference>
<dbReference type="GO" id="GO:0004056">
    <property type="term" value="F:argininosuccinate lyase activity"/>
    <property type="evidence" value="ECO:0007669"/>
    <property type="project" value="UniProtKB-UniRule"/>
</dbReference>
<dbReference type="GO" id="GO:0042450">
    <property type="term" value="P:arginine biosynthetic process via ornithine"/>
    <property type="evidence" value="ECO:0007669"/>
    <property type="project" value="InterPro"/>
</dbReference>
<dbReference type="GO" id="GO:0006526">
    <property type="term" value="P:L-arginine biosynthetic process"/>
    <property type="evidence" value="ECO:0007669"/>
    <property type="project" value="UniProtKB-UniRule"/>
</dbReference>
<dbReference type="CDD" id="cd01359">
    <property type="entry name" value="Argininosuccinate_lyase"/>
    <property type="match status" value="1"/>
</dbReference>
<dbReference type="FunFam" id="1.10.275.10:FF:000002">
    <property type="entry name" value="Argininosuccinate lyase"/>
    <property type="match status" value="1"/>
</dbReference>
<dbReference type="FunFam" id="1.10.40.30:FF:000001">
    <property type="entry name" value="Argininosuccinate lyase"/>
    <property type="match status" value="1"/>
</dbReference>
<dbReference type="FunFam" id="1.20.200.10:FF:000015">
    <property type="entry name" value="argininosuccinate lyase isoform X2"/>
    <property type="match status" value="1"/>
</dbReference>
<dbReference type="Gene3D" id="1.10.40.30">
    <property type="entry name" value="Fumarase/aspartase (C-terminal domain)"/>
    <property type="match status" value="1"/>
</dbReference>
<dbReference type="Gene3D" id="1.20.200.10">
    <property type="entry name" value="Fumarase/aspartase (Central domain)"/>
    <property type="match status" value="1"/>
</dbReference>
<dbReference type="Gene3D" id="1.10.275.10">
    <property type="entry name" value="Fumarase/aspartase (N-terminal domain)"/>
    <property type="match status" value="1"/>
</dbReference>
<dbReference type="HAMAP" id="MF_00006">
    <property type="entry name" value="Arg_succ_lyase"/>
    <property type="match status" value="1"/>
</dbReference>
<dbReference type="InterPro" id="IPR029419">
    <property type="entry name" value="Arg_succ_lyase_C"/>
</dbReference>
<dbReference type="InterPro" id="IPR009049">
    <property type="entry name" value="Argininosuccinate_lyase"/>
</dbReference>
<dbReference type="InterPro" id="IPR024083">
    <property type="entry name" value="Fumarase/histidase_N"/>
</dbReference>
<dbReference type="InterPro" id="IPR020557">
    <property type="entry name" value="Fumarate_lyase_CS"/>
</dbReference>
<dbReference type="InterPro" id="IPR000362">
    <property type="entry name" value="Fumarate_lyase_fam"/>
</dbReference>
<dbReference type="InterPro" id="IPR022761">
    <property type="entry name" value="Fumarate_lyase_N"/>
</dbReference>
<dbReference type="InterPro" id="IPR008948">
    <property type="entry name" value="L-Aspartase-like"/>
</dbReference>
<dbReference type="NCBIfam" id="TIGR00838">
    <property type="entry name" value="argH"/>
    <property type="match status" value="1"/>
</dbReference>
<dbReference type="PANTHER" id="PTHR43814">
    <property type="entry name" value="ARGININOSUCCINATE LYASE"/>
    <property type="match status" value="1"/>
</dbReference>
<dbReference type="PANTHER" id="PTHR43814:SF1">
    <property type="entry name" value="ARGININOSUCCINATE LYASE"/>
    <property type="match status" value="1"/>
</dbReference>
<dbReference type="Pfam" id="PF14698">
    <property type="entry name" value="ASL_C2"/>
    <property type="match status" value="1"/>
</dbReference>
<dbReference type="Pfam" id="PF00206">
    <property type="entry name" value="Lyase_1"/>
    <property type="match status" value="1"/>
</dbReference>
<dbReference type="PRINTS" id="PR00145">
    <property type="entry name" value="ARGSUCLYASE"/>
</dbReference>
<dbReference type="PRINTS" id="PR00149">
    <property type="entry name" value="FUMRATELYASE"/>
</dbReference>
<dbReference type="SUPFAM" id="SSF48557">
    <property type="entry name" value="L-aspartase-like"/>
    <property type="match status" value="1"/>
</dbReference>
<dbReference type="PROSITE" id="PS00163">
    <property type="entry name" value="FUMARATE_LYASES"/>
    <property type="match status" value="1"/>
</dbReference>
<accession>Q3ASM4</accession>
<proteinExistence type="inferred from homology"/>